<comment type="function">
    <text evidence="1">Catalyzes the transfer of endogenously produced octanoic acid from octanoyl-acyl-carrier-protein onto the lipoyl domains of lipoate-dependent enzymes. Lipoyl-ACP can also act as a substrate although octanoyl-ACP is likely to be the physiological substrate.</text>
</comment>
<comment type="catalytic activity">
    <reaction evidence="1">
        <text>octanoyl-[ACP] + L-lysyl-[protein] = N(6)-octanoyl-L-lysyl-[protein] + holo-[ACP] + H(+)</text>
        <dbReference type="Rhea" id="RHEA:17665"/>
        <dbReference type="Rhea" id="RHEA-COMP:9636"/>
        <dbReference type="Rhea" id="RHEA-COMP:9685"/>
        <dbReference type="Rhea" id="RHEA-COMP:9752"/>
        <dbReference type="Rhea" id="RHEA-COMP:9928"/>
        <dbReference type="ChEBI" id="CHEBI:15378"/>
        <dbReference type="ChEBI" id="CHEBI:29969"/>
        <dbReference type="ChEBI" id="CHEBI:64479"/>
        <dbReference type="ChEBI" id="CHEBI:78463"/>
        <dbReference type="ChEBI" id="CHEBI:78809"/>
        <dbReference type="EC" id="2.3.1.181"/>
    </reaction>
</comment>
<comment type="pathway">
    <text evidence="1">Protein modification; protein lipoylation via endogenous pathway; protein N(6)-(lipoyl)lysine from octanoyl-[acyl-carrier-protein]: step 1/2.</text>
</comment>
<comment type="subcellular location">
    <subcellularLocation>
        <location evidence="1">Cytoplasm</location>
    </subcellularLocation>
</comment>
<comment type="miscellaneous">
    <text evidence="1">In the reaction, the free carboxyl group of octanoic acid is attached via an amide linkage to the epsilon-amino group of a specific lysine residue of lipoyl domains of lipoate-dependent enzymes.</text>
</comment>
<comment type="similarity">
    <text evidence="1">Belongs to the LipB family.</text>
</comment>
<keyword id="KW-0012">Acyltransferase</keyword>
<keyword id="KW-0963">Cytoplasm</keyword>
<keyword id="KW-1185">Reference proteome</keyword>
<keyword id="KW-0808">Transferase</keyword>
<feature type="chain" id="PRO_0000062855" description="Octanoyltransferase">
    <location>
        <begin position="1"/>
        <end position="204"/>
    </location>
</feature>
<feature type="domain" description="BPL/LPL catalytic" evidence="2">
    <location>
        <begin position="30"/>
        <end position="204"/>
    </location>
</feature>
<feature type="active site" description="Acyl-thioester intermediate" evidence="1">
    <location>
        <position position="167"/>
    </location>
</feature>
<feature type="binding site" evidence="1">
    <location>
        <begin position="69"/>
        <end position="76"/>
    </location>
    <ligand>
        <name>substrate</name>
    </ligand>
</feature>
<feature type="binding site" evidence="1">
    <location>
        <begin position="136"/>
        <end position="138"/>
    </location>
    <ligand>
        <name>substrate</name>
    </ligand>
</feature>
<feature type="binding site" evidence="1">
    <location>
        <begin position="149"/>
        <end position="151"/>
    </location>
    <ligand>
        <name>substrate</name>
    </ligand>
</feature>
<feature type="site" description="Lowers pKa of active site Cys" evidence="1">
    <location>
        <position position="133"/>
    </location>
</feature>
<proteinExistence type="inferred from homology"/>
<reference key="1">
    <citation type="journal article" date="2003" name="J. Bacteriol.">
        <title>Complete genome sequence of the ammonia-oxidizing bacterium and obligate chemolithoautotroph Nitrosomonas europaea.</title>
        <authorList>
            <person name="Chain P."/>
            <person name="Lamerdin J.E."/>
            <person name="Larimer F.W."/>
            <person name="Regala W."/>
            <person name="Lao V."/>
            <person name="Land M.L."/>
            <person name="Hauser L."/>
            <person name="Hooper A.B."/>
            <person name="Klotz M.G."/>
            <person name="Norton J."/>
            <person name="Sayavedra-Soto L.A."/>
            <person name="Arciero D.M."/>
            <person name="Hommes N.G."/>
            <person name="Whittaker M.M."/>
            <person name="Arp D.J."/>
        </authorList>
    </citation>
    <scope>NUCLEOTIDE SEQUENCE [LARGE SCALE GENOMIC DNA]</scope>
    <source>
        <strain>ATCC 19718 / CIP 103999 / KCTC 2705 / NBRC 14298</strain>
    </source>
</reference>
<accession>Q82UJ6</accession>
<organism>
    <name type="scientific">Nitrosomonas europaea (strain ATCC 19718 / CIP 103999 / KCTC 2705 / NBRC 14298)</name>
    <dbReference type="NCBI Taxonomy" id="228410"/>
    <lineage>
        <taxon>Bacteria</taxon>
        <taxon>Pseudomonadati</taxon>
        <taxon>Pseudomonadota</taxon>
        <taxon>Betaproteobacteria</taxon>
        <taxon>Nitrosomonadales</taxon>
        <taxon>Nitrosomonadaceae</taxon>
        <taxon>Nitrosomonas</taxon>
    </lineage>
</organism>
<dbReference type="EC" id="2.3.1.181" evidence="1"/>
<dbReference type="EMBL" id="AL954747">
    <property type="protein sequence ID" value="CAD85399.1"/>
    <property type="molecule type" value="Genomic_DNA"/>
</dbReference>
<dbReference type="RefSeq" id="WP_011112056.1">
    <property type="nucleotide sequence ID" value="NC_004757.1"/>
</dbReference>
<dbReference type="SMR" id="Q82UJ6"/>
<dbReference type="STRING" id="228410.NE1488"/>
<dbReference type="GeneID" id="87104662"/>
<dbReference type="KEGG" id="neu:NE1488"/>
<dbReference type="eggNOG" id="COG0321">
    <property type="taxonomic scope" value="Bacteria"/>
</dbReference>
<dbReference type="HOGENOM" id="CLU_035168_3_1_4"/>
<dbReference type="OrthoDB" id="9787061at2"/>
<dbReference type="PhylomeDB" id="Q82UJ6"/>
<dbReference type="UniPathway" id="UPA00538">
    <property type="reaction ID" value="UER00592"/>
</dbReference>
<dbReference type="Proteomes" id="UP000001416">
    <property type="component" value="Chromosome"/>
</dbReference>
<dbReference type="GO" id="GO:0005737">
    <property type="term" value="C:cytoplasm"/>
    <property type="evidence" value="ECO:0007669"/>
    <property type="project" value="UniProtKB-SubCell"/>
</dbReference>
<dbReference type="GO" id="GO:0033819">
    <property type="term" value="F:lipoyl(octanoyl) transferase activity"/>
    <property type="evidence" value="ECO:0007669"/>
    <property type="project" value="UniProtKB-EC"/>
</dbReference>
<dbReference type="GO" id="GO:0036211">
    <property type="term" value="P:protein modification process"/>
    <property type="evidence" value="ECO:0007669"/>
    <property type="project" value="InterPro"/>
</dbReference>
<dbReference type="CDD" id="cd16444">
    <property type="entry name" value="LipB"/>
    <property type="match status" value="1"/>
</dbReference>
<dbReference type="FunFam" id="3.30.930.10:FF:000020">
    <property type="entry name" value="Octanoyltransferase"/>
    <property type="match status" value="1"/>
</dbReference>
<dbReference type="Gene3D" id="3.30.930.10">
    <property type="entry name" value="Bira Bifunctional Protein, Domain 2"/>
    <property type="match status" value="1"/>
</dbReference>
<dbReference type="HAMAP" id="MF_00013">
    <property type="entry name" value="LipB"/>
    <property type="match status" value="1"/>
</dbReference>
<dbReference type="InterPro" id="IPR045864">
    <property type="entry name" value="aa-tRNA-synth_II/BPL/LPL"/>
</dbReference>
<dbReference type="InterPro" id="IPR004143">
    <property type="entry name" value="BPL_LPL_catalytic"/>
</dbReference>
<dbReference type="InterPro" id="IPR000544">
    <property type="entry name" value="Octanoyltransferase"/>
</dbReference>
<dbReference type="InterPro" id="IPR020605">
    <property type="entry name" value="Octanoyltransferase_CS"/>
</dbReference>
<dbReference type="NCBIfam" id="TIGR00214">
    <property type="entry name" value="lipB"/>
    <property type="match status" value="1"/>
</dbReference>
<dbReference type="NCBIfam" id="NF010922">
    <property type="entry name" value="PRK14342.1"/>
    <property type="match status" value="1"/>
</dbReference>
<dbReference type="PANTHER" id="PTHR10993:SF7">
    <property type="entry name" value="LIPOYLTRANSFERASE 2, MITOCHONDRIAL-RELATED"/>
    <property type="match status" value="1"/>
</dbReference>
<dbReference type="PANTHER" id="PTHR10993">
    <property type="entry name" value="OCTANOYLTRANSFERASE"/>
    <property type="match status" value="1"/>
</dbReference>
<dbReference type="Pfam" id="PF21948">
    <property type="entry name" value="LplA-B_cat"/>
    <property type="match status" value="1"/>
</dbReference>
<dbReference type="PIRSF" id="PIRSF016262">
    <property type="entry name" value="LPLase"/>
    <property type="match status" value="1"/>
</dbReference>
<dbReference type="SUPFAM" id="SSF55681">
    <property type="entry name" value="Class II aaRS and biotin synthetases"/>
    <property type="match status" value="1"/>
</dbReference>
<dbReference type="PROSITE" id="PS51733">
    <property type="entry name" value="BPL_LPL_CATALYTIC"/>
    <property type="match status" value="1"/>
</dbReference>
<dbReference type="PROSITE" id="PS01313">
    <property type="entry name" value="LIPB"/>
    <property type="match status" value="1"/>
</dbReference>
<sequence>MFTVTVKNMGTTEYLTAWQAMKNFTAQRTCETPDEIWLLEHPPVYTQGIAGKPEHLLFPNQIPVIKTDRGGQITYHGPGQIILYLLLDLHRWRLNIRQLVRKMEGAVIDLLSEYDVVAQGDENAPGVYVDGAKIASLGLKIRRGACYHGIAFNADMDLTPFTAINPCGYRGLRVTQAKDLGIADCKEMLATKLAQSFINQLTDV</sequence>
<evidence type="ECO:0000255" key="1">
    <source>
        <dbReference type="HAMAP-Rule" id="MF_00013"/>
    </source>
</evidence>
<evidence type="ECO:0000255" key="2">
    <source>
        <dbReference type="PROSITE-ProRule" id="PRU01067"/>
    </source>
</evidence>
<protein>
    <recommendedName>
        <fullName evidence="1">Octanoyltransferase</fullName>
        <ecNumber evidence="1">2.3.1.181</ecNumber>
    </recommendedName>
    <alternativeName>
        <fullName evidence="1">Lipoate-protein ligase B</fullName>
    </alternativeName>
    <alternativeName>
        <fullName evidence="1">Lipoyl/octanoyl transferase</fullName>
    </alternativeName>
    <alternativeName>
        <fullName evidence="1">Octanoyl-[acyl-carrier-protein]-protein N-octanoyltransferase</fullName>
    </alternativeName>
</protein>
<gene>
    <name evidence="1" type="primary">lipB</name>
    <name type="ordered locus">NE1488</name>
</gene>
<name>LIPB_NITEU</name>